<proteinExistence type="inferred from homology"/>
<dbReference type="EMBL" id="BA000028">
    <property type="protein sequence ID" value="BAC14362.1"/>
    <property type="molecule type" value="Genomic_DNA"/>
</dbReference>
<dbReference type="RefSeq" id="WP_011066796.1">
    <property type="nucleotide sequence ID" value="NC_004193.1"/>
</dbReference>
<dbReference type="SMR" id="Q8ENS1"/>
<dbReference type="STRING" id="221109.gene:10734657"/>
<dbReference type="KEGG" id="oih:OB2406"/>
<dbReference type="eggNOG" id="COG4129">
    <property type="taxonomic scope" value="Bacteria"/>
</dbReference>
<dbReference type="HOGENOM" id="CLU_067028_0_0_9"/>
<dbReference type="OrthoDB" id="2690036at2"/>
<dbReference type="PhylomeDB" id="Q8ENS1"/>
<dbReference type="Proteomes" id="UP000000822">
    <property type="component" value="Chromosome"/>
</dbReference>
<dbReference type="GO" id="GO:0005886">
    <property type="term" value="C:plasma membrane"/>
    <property type="evidence" value="ECO:0007669"/>
    <property type="project" value="UniProtKB-SubCell"/>
</dbReference>
<dbReference type="InterPro" id="IPR010343">
    <property type="entry name" value="ArAE_1"/>
</dbReference>
<dbReference type="InterPro" id="IPR052984">
    <property type="entry name" value="UPF0421"/>
</dbReference>
<dbReference type="PANTHER" id="PTHR40064:SF1">
    <property type="entry name" value="MEMBRANE PROTEIN"/>
    <property type="match status" value="1"/>
</dbReference>
<dbReference type="PANTHER" id="PTHR40064">
    <property type="entry name" value="MEMBRANE PROTEIN-RELATED"/>
    <property type="match status" value="1"/>
</dbReference>
<dbReference type="Pfam" id="PF06081">
    <property type="entry name" value="ArAE_1"/>
    <property type="match status" value="1"/>
</dbReference>
<name>Y2406_OCEIH</name>
<accession>Q8ENS1</accession>
<keyword id="KW-1003">Cell membrane</keyword>
<keyword id="KW-0472">Membrane</keyword>
<keyword id="KW-1185">Reference proteome</keyword>
<keyword id="KW-0812">Transmembrane</keyword>
<keyword id="KW-1133">Transmembrane helix</keyword>
<comment type="subcellular location">
    <subcellularLocation>
        <location evidence="2">Cell membrane</location>
        <topology evidence="2">Multi-pass membrane protein</topology>
    </subcellularLocation>
</comment>
<comment type="similarity">
    <text evidence="2">Belongs to the UPF0421 family.</text>
</comment>
<evidence type="ECO:0000255" key="1"/>
<evidence type="ECO:0000305" key="2"/>
<protein>
    <recommendedName>
        <fullName>UPF0421 protein OB2406</fullName>
    </recommendedName>
</protein>
<gene>
    <name type="ordered locus">OB2406</name>
</gene>
<feature type="chain" id="PRO_0000283012" description="UPF0421 protein OB2406">
    <location>
        <begin position="1"/>
        <end position="346"/>
    </location>
</feature>
<feature type="transmembrane region" description="Helical" evidence="1">
    <location>
        <begin position="16"/>
        <end position="36"/>
    </location>
</feature>
<feature type="transmembrane region" description="Helical" evidence="1">
    <location>
        <begin position="55"/>
        <end position="75"/>
    </location>
</feature>
<feature type="transmembrane region" description="Helical" evidence="1">
    <location>
        <begin position="102"/>
        <end position="122"/>
    </location>
</feature>
<feature type="transmembrane region" description="Helical" evidence="1">
    <location>
        <begin position="128"/>
        <end position="148"/>
    </location>
</feature>
<sequence>MKLRSFIGSRVIKTGIAVLLTAYICEWIGWSPVFAVITAIVTIEPTVSDSIRKGLIRFPASAIGAAYAVLFIALFGNSPVTYALSAVFTITTCFRLKLHDGLLVATITSVAMVDVIHSNYVMEFFIRLFTTTIGLSVSTLVNMFLLPPDYQKNIQTKVSSIAQELGKQIQGIYYCLLHVDEINNESKYLDKLLELDKLIIRAEILSRYQTNDSKYHFTENNQEKFKDIKTQLHFLRIMHYHLTNVIDHPKEQINIDEKEKNELLNVSSYIAQVLKKELAYNSDDIQDKRTRLNELFWKEKHRTHNLSSDMLNKLPFELVMLYELISILELTEDYFYTANLHKENAN</sequence>
<reference key="1">
    <citation type="journal article" date="2002" name="Nucleic Acids Res.">
        <title>Genome sequence of Oceanobacillus iheyensis isolated from the Iheya Ridge and its unexpected adaptive capabilities to extreme environments.</title>
        <authorList>
            <person name="Takami H."/>
            <person name="Takaki Y."/>
            <person name="Uchiyama I."/>
        </authorList>
    </citation>
    <scope>NUCLEOTIDE SEQUENCE [LARGE SCALE GENOMIC DNA]</scope>
    <source>
        <strain>DSM 14371 / CIP 107618 / JCM 11309 / KCTC 3954 / HTE831</strain>
    </source>
</reference>
<organism>
    <name type="scientific">Oceanobacillus iheyensis (strain DSM 14371 / CIP 107618 / JCM 11309 / KCTC 3954 / HTE831)</name>
    <dbReference type="NCBI Taxonomy" id="221109"/>
    <lineage>
        <taxon>Bacteria</taxon>
        <taxon>Bacillati</taxon>
        <taxon>Bacillota</taxon>
        <taxon>Bacilli</taxon>
        <taxon>Bacillales</taxon>
        <taxon>Bacillaceae</taxon>
        <taxon>Oceanobacillus</taxon>
    </lineage>
</organism>